<dbReference type="EC" id="4.2.3.125" evidence="3 4"/>
<dbReference type="EC" id="4.2.3.126" evidence="3 4"/>
<dbReference type="EC" id="4.2.3.23" evidence="3 4"/>
<dbReference type="EMBL" id="AACS02000002">
    <property type="protein sequence ID" value="EAU88892.1"/>
    <property type="molecule type" value="Genomic_DNA"/>
</dbReference>
<dbReference type="RefSeq" id="XP_001832925.1">
    <property type="nucleotide sequence ID" value="XM_001832873.1"/>
</dbReference>
<dbReference type="SMR" id="A8NE23"/>
<dbReference type="STRING" id="240176.A8NE23"/>
<dbReference type="GeneID" id="6009414"/>
<dbReference type="KEGG" id="cci:CC1G_12294"/>
<dbReference type="VEuPathDB" id="FungiDB:CC1G_12294"/>
<dbReference type="eggNOG" id="ENOG502S2X0">
    <property type="taxonomic scope" value="Eukaryota"/>
</dbReference>
<dbReference type="HOGENOM" id="CLU_042538_2_1_1"/>
<dbReference type="InParanoid" id="A8NE23"/>
<dbReference type="OMA" id="DLIEYAM"/>
<dbReference type="OrthoDB" id="2861623at2759"/>
<dbReference type="BRENDA" id="4.2.3.125">
    <property type="organism ID" value="1606"/>
</dbReference>
<dbReference type="BRENDA" id="4.2.3.126">
    <property type="organism ID" value="1606"/>
</dbReference>
<dbReference type="Proteomes" id="UP000001861">
    <property type="component" value="Unassembled WGS sequence"/>
</dbReference>
<dbReference type="GO" id="GO:0034005">
    <property type="term" value="F:germacrene-A synthase activity"/>
    <property type="evidence" value="ECO:0007669"/>
    <property type="project" value="UniProtKB-EC"/>
</dbReference>
<dbReference type="GO" id="GO:0046872">
    <property type="term" value="F:metal ion binding"/>
    <property type="evidence" value="ECO:0007669"/>
    <property type="project" value="UniProtKB-KW"/>
</dbReference>
<dbReference type="GO" id="GO:0008299">
    <property type="term" value="P:isoprenoid biosynthetic process"/>
    <property type="evidence" value="ECO:0007669"/>
    <property type="project" value="UniProtKB-ARBA"/>
</dbReference>
<dbReference type="Gene3D" id="1.10.600.10">
    <property type="entry name" value="Farnesyl Diphosphate Synthase"/>
    <property type="match status" value="1"/>
</dbReference>
<dbReference type="InterPro" id="IPR008949">
    <property type="entry name" value="Isoprenoid_synthase_dom_sf"/>
</dbReference>
<dbReference type="InterPro" id="IPR034686">
    <property type="entry name" value="Terpene_cyclase-like_2"/>
</dbReference>
<dbReference type="PANTHER" id="PTHR35201:SF4">
    <property type="entry name" value="BETA-PINACENE SYNTHASE-RELATED"/>
    <property type="match status" value="1"/>
</dbReference>
<dbReference type="PANTHER" id="PTHR35201">
    <property type="entry name" value="TERPENE SYNTHASE"/>
    <property type="match status" value="1"/>
</dbReference>
<dbReference type="Pfam" id="PF19086">
    <property type="entry name" value="Terpene_syn_C_2"/>
    <property type="match status" value="1"/>
</dbReference>
<dbReference type="SFLD" id="SFLDS00005">
    <property type="entry name" value="Isoprenoid_Synthase_Type_I"/>
    <property type="match status" value="1"/>
</dbReference>
<dbReference type="SFLD" id="SFLDG01020">
    <property type="entry name" value="Terpene_Cyclase_Like_2"/>
    <property type="match status" value="1"/>
</dbReference>
<dbReference type="SUPFAM" id="SSF48576">
    <property type="entry name" value="Terpenoid synthases"/>
    <property type="match status" value="1"/>
</dbReference>
<feature type="chain" id="PRO_0000419683" description="Alpha-muurolene synthase">
    <location>
        <begin position="1"/>
        <end position="425"/>
    </location>
</feature>
<feature type="region of interest" description="Disordered" evidence="2">
    <location>
        <begin position="348"/>
        <end position="382"/>
    </location>
</feature>
<feature type="short sequence motif" description="DDXXD motif">
    <location>
        <begin position="97"/>
        <end position="101"/>
    </location>
</feature>
<feature type="compositionally biased region" description="Pro residues" evidence="2">
    <location>
        <begin position="349"/>
        <end position="362"/>
    </location>
</feature>
<feature type="compositionally biased region" description="Basic and acidic residues" evidence="2">
    <location>
        <begin position="366"/>
        <end position="377"/>
    </location>
</feature>
<feature type="binding site" evidence="1">
    <location>
        <position position="97"/>
    </location>
    <ligand>
        <name>Mg(2+)</name>
        <dbReference type="ChEBI" id="CHEBI:18420"/>
        <label>1</label>
    </ligand>
</feature>
<feature type="binding site" evidence="1">
    <location>
        <position position="97"/>
    </location>
    <ligand>
        <name>Mg(2+)</name>
        <dbReference type="ChEBI" id="CHEBI:18420"/>
        <label>2</label>
    </ligand>
</feature>
<feature type="binding site" evidence="1">
    <location>
        <position position="101"/>
    </location>
    <ligand>
        <name>Mg(2+)</name>
        <dbReference type="ChEBI" id="CHEBI:18420"/>
        <label>1</label>
    </ligand>
</feature>
<feature type="binding site" evidence="1">
    <location>
        <position position="101"/>
    </location>
    <ligand>
        <name>Mg(2+)</name>
        <dbReference type="ChEBI" id="CHEBI:18420"/>
        <label>2</label>
    </ligand>
</feature>
<feature type="binding site" evidence="1">
    <location>
        <position position="240"/>
    </location>
    <ligand>
        <name>Mg(2+)</name>
        <dbReference type="ChEBI" id="CHEBI:18420"/>
        <label>3</label>
    </ligand>
</feature>
<feature type="binding site" evidence="1">
    <location>
        <position position="244"/>
    </location>
    <ligand>
        <name>Mg(2+)</name>
        <dbReference type="ChEBI" id="CHEBI:18420"/>
        <label>3</label>
    </ligand>
</feature>
<feature type="binding site" evidence="1">
    <location>
        <position position="248"/>
    </location>
    <ligand>
        <name>Mg(2+)</name>
        <dbReference type="ChEBI" id="CHEBI:18420"/>
        <label>3</label>
    </ligand>
</feature>
<feature type="mutagenesis site" description="Weak effect on catalytic activity." evidence="4">
    <original>K</original>
    <variation>I</variation>
    <location>
        <position position="251"/>
    </location>
</feature>
<feature type="mutagenesis site" description="Increased synthesis by of the cis pathway product delta-cadinene 8." evidence="4">
    <original>H</original>
    <variation>P</variation>
    <location>
        <position position="255"/>
    </location>
</feature>
<feature type="mutagenesis site" description="Loss of catalytic activity." evidence="4">
    <original>N</original>
    <variation>L</variation>
    <location>
        <position position="256"/>
    </location>
</feature>
<organism>
    <name type="scientific">Coprinopsis cinerea (strain Okayama-7 / 130 / ATCC MYA-4618 / FGSC 9003)</name>
    <name type="common">Inky cap fungus</name>
    <name type="synonym">Hormographiella aspergillata</name>
    <dbReference type="NCBI Taxonomy" id="240176"/>
    <lineage>
        <taxon>Eukaryota</taxon>
        <taxon>Fungi</taxon>
        <taxon>Dikarya</taxon>
        <taxon>Basidiomycota</taxon>
        <taxon>Agaricomycotina</taxon>
        <taxon>Agaricomycetes</taxon>
        <taxon>Agaricomycetidae</taxon>
        <taxon>Agaricales</taxon>
        <taxon>Agaricineae</taxon>
        <taxon>Psathyrellaceae</taxon>
        <taxon>Coprinopsis</taxon>
    </lineage>
</organism>
<accession>A8NE23</accession>
<keyword id="KW-0456">Lyase</keyword>
<keyword id="KW-0460">Magnesium</keyword>
<keyword id="KW-0479">Metal-binding</keyword>
<keyword id="KW-1185">Reference proteome</keyword>
<gene>
    <name type="primary">COP3</name>
    <name type="ORF">CC1G_12294</name>
</gene>
<proteinExistence type="evidence at protein level"/>
<name>COP3_COPC7</name>
<evidence type="ECO:0000250" key="1"/>
<evidence type="ECO:0000256" key="2">
    <source>
        <dbReference type="SAM" id="MobiDB-lite"/>
    </source>
</evidence>
<evidence type="ECO:0000269" key="3">
    <source>
    </source>
</evidence>
<evidence type="ECO:0000269" key="4">
    <source>
    </source>
</evidence>
<evidence type="ECO:0000305" key="5"/>
<reference key="1">
    <citation type="journal article" date="2010" name="Proc. Natl. Acad. Sci. U.S.A.">
        <title>Insights into evolution of multicellular fungi from the assembled chromosomes of the mushroom Coprinopsis cinerea (Coprinus cinereus).</title>
        <authorList>
            <person name="Stajich J.E."/>
            <person name="Wilke S.K."/>
            <person name="Ahren D."/>
            <person name="Au C.H."/>
            <person name="Birren B.W."/>
            <person name="Borodovsky M."/>
            <person name="Burns C."/>
            <person name="Canbaeck B."/>
            <person name="Casselton L.A."/>
            <person name="Cheng C.K."/>
            <person name="Deng J."/>
            <person name="Dietrich F.S."/>
            <person name="Fargo D.C."/>
            <person name="Farman M.L."/>
            <person name="Gathman A.C."/>
            <person name="Goldberg J."/>
            <person name="Guigo R."/>
            <person name="Hoegger P.J."/>
            <person name="Hooker J.B."/>
            <person name="Huggins A."/>
            <person name="James T.Y."/>
            <person name="Kamada T."/>
            <person name="Kilaru S."/>
            <person name="Kodira C."/>
            <person name="Kuees U."/>
            <person name="Kupfer D."/>
            <person name="Kwan H.S."/>
            <person name="Lomsadze A."/>
            <person name="Li W."/>
            <person name="Lilly W.W."/>
            <person name="Ma L.-J."/>
            <person name="Mackey A.J."/>
            <person name="Manning G."/>
            <person name="Martin F."/>
            <person name="Muraguchi H."/>
            <person name="Natvig D.O."/>
            <person name="Palmerini H."/>
            <person name="Ramesh M.A."/>
            <person name="Rehmeyer C.J."/>
            <person name="Roe B.A."/>
            <person name="Shenoy N."/>
            <person name="Stanke M."/>
            <person name="Ter-Hovhannisyan V."/>
            <person name="Tunlid A."/>
            <person name="Velagapudi R."/>
            <person name="Vision T.J."/>
            <person name="Zeng Q."/>
            <person name="Zolan M.E."/>
            <person name="Pukkila P.J."/>
        </authorList>
    </citation>
    <scope>NUCLEOTIDE SEQUENCE [LARGE SCALE GENOMIC DNA]</scope>
    <source>
        <strain>Okayama-7 / 130 / ATCC MYA-4618 / FGSC 9003</strain>
    </source>
</reference>
<reference key="2">
    <citation type="journal article" date="2009" name="Mol. Microbiol.">
        <title>Diversity of sesquiterpene synthases in the basidiomycete Coprinus cinereus.</title>
        <authorList>
            <person name="Agger S."/>
            <person name="Lopez-Gallego F."/>
            <person name="Schmidt-Dannert C."/>
        </authorList>
    </citation>
    <scope>FUNCTION</scope>
    <scope>CATALYTIC ACTIVITY</scope>
</reference>
<reference key="3">
    <citation type="journal article" date="2010" name="Appl. Environ. Microbiol.">
        <title>Selectivity of fungal sesquiterpene synthases: role of the active site's H-1 alpha loop in catalysis.</title>
        <authorList>
            <person name="Lopez-Gallego F."/>
            <person name="Wawrzyn G.T."/>
            <person name="Schmidt-Dannert C."/>
        </authorList>
    </citation>
    <scope>FUNCTION</scope>
    <scope>CATALYTIC ACTIVITY</scope>
    <scope>MUTAGENESIS OF LYS-251; HIS-255 AND ASN-256</scope>
</reference>
<protein>
    <recommendedName>
        <fullName>Alpha-muurolene synthase</fullName>
        <ecNumber evidence="3 4">4.2.3.125</ecNumber>
    </recommendedName>
    <alternativeName>
        <fullName>Gamma-muurolene synthase</fullName>
        <ecNumber evidence="3 4">4.2.3.126</ecNumber>
    </alternativeName>
    <alternativeName>
        <fullName>Germacrene-A synthase</fullName>
        <ecNumber evidence="3 4">4.2.3.23</ecNumber>
    </alternativeName>
</protein>
<comment type="function">
    <text evidence="3 4">Sesquiterpene synthase that catalyzes the formation of alpha-muurolene, and at lower level (+)-(R)-germacrene A and gamma-muurolene.</text>
</comment>
<comment type="catalytic activity">
    <reaction evidence="3 4">
        <text>(2E,6E)-farnesyl diphosphate = alpha-muurolene + diphosphate</text>
        <dbReference type="Rhea" id="RHEA:33103"/>
        <dbReference type="ChEBI" id="CHEBI:33019"/>
        <dbReference type="ChEBI" id="CHEBI:64797"/>
        <dbReference type="ChEBI" id="CHEBI:175763"/>
        <dbReference type="EC" id="4.2.3.125"/>
    </reaction>
</comment>
<comment type="catalytic activity">
    <reaction evidence="3 4">
        <text>(2E,6E)-farnesyl diphosphate = gamma-muurolene + diphosphate</text>
        <dbReference type="Rhea" id="RHEA:33107"/>
        <dbReference type="ChEBI" id="CHEBI:33019"/>
        <dbReference type="ChEBI" id="CHEBI:64798"/>
        <dbReference type="ChEBI" id="CHEBI:175763"/>
        <dbReference type="EC" id="4.2.3.126"/>
    </reaction>
</comment>
<comment type="catalytic activity">
    <reaction evidence="3 4">
        <text>(2E,6E)-farnesyl diphosphate = (+)-(R)-germacrene A + diphosphate</text>
        <dbReference type="Rhea" id="RHEA:12516"/>
        <dbReference type="ChEBI" id="CHEBI:33019"/>
        <dbReference type="ChEBI" id="CHEBI:41595"/>
        <dbReference type="ChEBI" id="CHEBI:175763"/>
        <dbReference type="EC" id="4.2.3.23"/>
    </reaction>
</comment>
<comment type="cofactor">
    <cofactor evidence="1">
        <name>Mg(2+)</name>
        <dbReference type="ChEBI" id="CHEBI:18420"/>
    </cofactor>
    <text evidence="1">Binds 3 Mg(2+) ions per subunit.</text>
</comment>
<comment type="domain">
    <text evidence="1">The Asp-Asp-Xaa-Xaa-Asp/Glu (DDXXD/E) motif is important for the catalytic activity, presumably through binding to Mg(2+).</text>
</comment>
<comment type="similarity">
    <text evidence="5">Belongs to the terpene synthase family.</text>
</comment>
<sequence>MSTPSSSLTTDESPASFILPDLVSHCPFPLRYHPKGDEVAKQTVHWLDSNCPDLTAKERKAMYGLQAGELTGYCYPYTTPERLRVVADFLNYLFHLDNISDGMMTRETAVLADVVMNALWFPEDYRPTKGQAAEELNPGKLARDFWSRCIPDCGPGTQARFKETFGSFFEAVNIQARARDEGVIPDLESYIDVRRDTSGCKPCWVLIEYALGIDLPDFVVEHPVIAALNQGTNDLVTWSNDIFSYNVEQSKGDTHNMIIILMEHHGHTLQSAVDYVGSLCQQTINTFCENKQQLPSWGPEIDDMVAKYVQGLEDWIVGSLHWSFQTRRYFGDEGQEIKQHRLVKLLTVAPPPPPPPPTPPPQSSDADTKKQKVKAQDGKGPVSDEEVWALVRAEQSKGSILESLFGFLTTSLSRIFFGYFFAYSH</sequence>